<proteinExistence type="inferred from homology"/>
<feature type="chain" id="PRO_1000056229" description="Ubiquinone/menaquinone biosynthesis C-methyltransferase UbiE">
    <location>
        <begin position="1"/>
        <end position="243"/>
    </location>
</feature>
<feature type="binding site" evidence="1">
    <location>
        <position position="69"/>
    </location>
    <ligand>
        <name>S-adenosyl-L-methionine</name>
        <dbReference type="ChEBI" id="CHEBI:59789"/>
    </ligand>
</feature>
<feature type="binding site" evidence="1">
    <location>
        <position position="90"/>
    </location>
    <ligand>
        <name>S-adenosyl-L-methionine</name>
        <dbReference type="ChEBI" id="CHEBI:59789"/>
    </ligand>
</feature>
<feature type="binding site" evidence="1">
    <location>
        <begin position="116"/>
        <end position="117"/>
    </location>
    <ligand>
        <name>S-adenosyl-L-methionine</name>
        <dbReference type="ChEBI" id="CHEBI:59789"/>
    </ligand>
</feature>
<dbReference type="EC" id="2.1.1.163" evidence="1"/>
<dbReference type="EC" id="2.1.1.201" evidence="1"/>
<dbReference type="EMBL" id="CP000546">
    <property type="protein sequence ID" value="ABN02309.1"/>
    <property type="molecule type" value="Genomic_DNA"/>
</dbReference>
<dbReference type="RefSeq" id="WP_004189973.1">
    <property type="nucleotide sequence ID" value="NC_008836.1"/>
</dbReference>
<dbReference type="SMR" id="A2S8L1"/>
<dbReference type="GeneID" id="93059149"/>
<dbReference type="KEGG" id="bml:BMA10229_A2318"/>
<dbReference type="HOGENOM" id="CLU_037990_0_0_4"/>
<dbReference type="UniPathway" id="UPA00079">
    <property type="reaction ID" value="UER00169"/>
</dbReference>
<dbReference type="UniPathway" id="UPA00232"/>
<dbReference type="Proteomes" id="UP000002283">
    <property type="component" value="Chromosome I"/>
</dbReference>
<dbReference type="GO" id="GO:0008425">
    <property type="term" value="F:2-methoxy-6-polyprenyl-1,4-benzoquinol methyltransferase activity"/>
    <property type="evidence" value="ECO:0007669"/>
    <property type="project" value="UniProtKB-UniRule"/>
</dbReference>
<dbReference type="GO" id="GO:0043770">
    <property type="term" value="F:demethylmenaquinone methyltransferase activity"/>
    <property type="evidence" value="ECO:0007669"/>
    <property type="project" value="UniProtKB-UniRule"/>
</dbReference>
<dbReference type="GO" id="GO:0009060">
    <property type="term" value="P:aerobic respiration"/>
    <property type="evidence" value="ECO:0007669"/>
    <property type="project" value="UniProtKB-UniRule"/>
</dbReference>
<dbReference type="GO" id="GO:0009234">
    <property type="term" value="P:menaquinone biosynthetic process"/>
    <property type="evidence" value="ECO:0007669"/>
    <property type="project" value="UniProtKB-UniRule"/>
</dbReference>
<dbReference type="GO" id="GO:0032259">
    <property type="term" value="P:methylation"/>
    <property type="evidence" value="ECO:0007669"/>
    <property type="project" value="UniProtKB-KW"/>
</dbReference>
<dbReference type="CDD" id="cd02440">
    <property type="entry name" value="AdoMet_MTases"/>
    <property type="match status" value="1"/>
</dbReference>
<dbReference type="Gene3D" id="3.40.50.150">
    <property type="entry name" value="Vaccinia Virus protein VP39"/>
    <property type="match status" value="1"/>
</dbReference>
<dbReference type="HAMAP" id="MF_01813">
    <property type="entry name" value="MenG_UbiE_methyltr"/>
    <property type="match status" value="1"/>
</dbReference>
<dbReference type="InterPro" id="IPR029063">
    <property type="entry name" value="SAM-dependent_MTases_sf"/>
</dbReference>
<dbReference type="InterPro" id="IPR004033">
    <property type="entry name" value="UbiE/COQ5_MeTrFase"/>
</dbReference>
<dbReference type="InterPro" id="IPR023576">
    <property type="entry name" value="UbiE/COQ5_MeTrFase_CS"/>
</dbReference>
<dbReference type="NCBIfam" id="TIGR01934">
    <property type="entry name" value="MenG_MenH_UbiE"/>
    <property type="match status" value="1"/>
</dbReference>
<dbReference type="NCBIfam" id="NF001240">
    <property type="entry name" value="PRK00216.1-1"/>
    <property type="match status" value="1"/>
</dbReference>
<dbReference type="NCBIfam" id="NF001244">
    <property type="entry name" value="PRK00216.1-5"/>
    <property type="match status" value="1"/>
</dbReference>
<dbReference type="PANTHER" id="PTHR43591:SF24">
    <property type="entry name" value="2-METHOXY-6-POLYPRENYL-1,4-BENZOQUINOL METHYLASE, MITOCHONDRIAL"/>
    <property type="match status" value="1"/>
</dbReference>
<dbReference type="PANTHER" id="PTHR43591">
    <property type="entry name" value="METHYLTRANSFERASE"/>
    <property type="match status" value="1"/>
</dbReference>
<dbReference type="Pfam" id="PF01209">
    <property type="entry name" value="Ubie_methyltran"/>
    <property type="match status" value="1"/>
</dbReference>
<dbReference type="SUPFAM" id="SSF53335">
    <property type="entry name" value="S-adenosyl-L-methionine-dependent methyltransferases"/>
    <property type="match status" value="1"/>
</dbReference>
<dbReference type="PROSITE" id="PS51608">
    <property type="entry name" value="SAM_MT_UBIE"/>
    <property type="match status" value="1"/>
</dbReference>
<dbReference type="PROSITE" id="PS01183">
    <property type="entry name" value="UBIE_1"/>
    <property type="match status" value="1"/>
</dbReference>
<reference key="1">
    <citation type="journal article" date="2010" name="Genome Biol. Evol.">
        <title>Continuing evolution of Burkholderia mallei through genome reduction and large-scale rearrangements.</title>
        <authorList>
            <person name="Losada L."/>
            <person name="Ronning C.M."/>
            <person name="DeShazer D."/>
            <person name="Woods D."/>
            <person name="Fedorova N."/>
            <person name="Kim H.S."/>
            <person name="Shabalina S.A."/>
            <person name="Pearson T.R."/>
            <person name="Brinkac L."/>
            <person name="Tan P."/>
            <person name="Nandi T."/>
            <person name="Crabtree J."/>
            <person name="Badger J."/>
            <person name="Beckstrom-Sternberg S."/>
            <person name="Saqib M."/>
            <person name="Schutzer S.E."/>
            <person name="Keim P."/>
            <person name="Nierman W.C."/>
        </authorList>
    </citation>
    <scope>NUCLEOTIDE SEQUENCE [LARGE SCALE GENOMIC DNA]</scope>
    <source>
        <strain>NCTC 10229</strain>
    </source>
</reference>
<organism>
    <name type="scientific">Burkholderia mallei (strain NCTC 10229)</name>
    <dbReference type="NCBI Taxonomy" id="412022"/>
    <lineage>
        <taxon>Bacteria</taxon>
        <taxon>Pseudomonadati</taxon>
        <taxon>Pseudomonadota</taxon>
        <taxon>Betaproteobacteria</taxon>
        <taxon>Burkholderiales</taxon>
        <taxon>Burkholderiaceae</taxon>
        <taxon>Burkholderia</taxon>
        <taxon>pseudomallei group</taxon>
    </lineage>
</organism>
<keyword id="KW-0474">Menaquinone biosynthesis</keyword>
<keyword id="KW-0489">Methyltransferase</keyword>
<keyword id="KW-0949">S-adenosyl-L-methionine</keyword>
<keyword id="KW-0808">Transferase</keyword>
<keyword id="KW-0831">Ubiquinone biosynthesis</keyword>
<comment type="function">
    <text evidence="1">Methyltransferase required for the conversion of demethylmenaquinol (DMKH2) to menaquinol (MKH2) and the conversion of 2-polyprenyl-6-methoxy-1,4-benzoquinol (DDMQH2) to 2-polyprenyl-3-methyl-6-methoxy-1,4-benzoquinol (DMQH2).</text>
</comment>
<comment type="catalytic activity">
    <reaction evidence="1">
        <text>a 2-demethylmenaquinol + S-adenosyl-L-methionine = a menaquinol + S-adenosyl-L-homocysteine + H(+)</text>
        <dbReference type="Rhea" id="RHEA:42640"/>
        <dbReference type="Rhea" id="RHEA-COMP:9539"/>
        <dbReference type="Rhea" id="RHEA-COMP:9563"/>
        <dbReference type="ChEBI" id="CHEBI:15378"/>
        <dbReference type="ChEBI" id="CHEBI:18151"/>
        <dbReference type="ChEBI" id="CHEBI:55437"/>
        <dbReference type="ChEBI" id="CHEBI:57856"/>
        <dbReference type="ChEBI" id="CHEBI:59789"/>
        <dbReference type="EC" id="2.1.1.163"/>
    </reaction>
</comment>
<comment type="catalytic activity">
    <reaction evidence="1">
        <text>a 2-methoxy-6-(all-trans-polyprenyl)benzene-1,4-diol + S-adenosyl-L-methionine = a 5-methoxy-2-methyl-3-(all-trans-polyprenyl)benzene-1,4-diol + S-adenosyl-L-homocysteine + H(+)</text>
        <dbReference type="Rhea" id="RHEA:28286"/>
        <dbReference type="Rhea" id="RHEA-COMP:10858"/>
        <dbReference type="Rhea" id="RHEA-COMP:10859"/>
        <dbReference type="ChEBI" id="CHEBI:15378"/>
        <dbReference type="ChEBI" id="CHEBI:57856"/>
        <dbReference type="ChEBI" id="CHEBI:59789"/>
        <dbReference type="ChEBI" id="CHEBI:84166"/>
        <dbReference type="ChEBI" id="CHEBI:84167"/>
        <dbReference type="EC" id="2.1.1.201"/>
    </reaction>
</comment>
<comment type="pathway">
    <text evidence="1">Quinol/quinone metabolism; menaquinone biosynthesis; menaquinol from 1,4-dihydroxy-2-naphthoate: step 2/2.</text>
</comment>
<comment type="pathway">
    <text evidence="1">Cofactor biosynthesis; ubiquinone biosynthesis.</text>
</comment>
<comment type="similarity">
    <text evidence="1">Belongs to the class I-like SAM-binding methyltransferase superfamily. MenG/UbiE family.</text>
</comment>
<sequence length="243" mass="26955">MSKTHFGFETVEENEKAKKVAGVFHSVASNYDLMNDLMSAGLHRAWKAFTIAQANVRPGGKVLDIAAGTGDLTKAFAKAAGPTGEVWHTDINESMLRVGRDRLLDKGVVTPSLLCDAEKLPFPDNYFDVVTVAFGLRNMTHKDSALAEMRRVAKPGGRVMVLEFSKVWEPLKKAYDVYSFKVLPWLGDKFAKDADSYRYLAESIRMHPDQETLKTMMEQAGLDAVKYYNLSGGVVALHVGTKY</sequence>
<accession>A2S8L1</accession>
<gene>
    <name evidence="1" type="primary">ubiE</name>
    <name type="ordered locus">BMA10229_A2318</name>
</gene>
<protein>
    <recommendedName>
        <fullName evidence="1">Ubiquinone/menaquinone biosynthesis C-methyltransferase UbiE</fullName>
        <ecNumber evidence="1">2.1.1.163</ecNumber>
        <ecNumber evidence="1">2.1.1.201</ecNumber>
    </recommendedName>
    <alternativeName>
        <fullName evidence="1">2-methoxy-6-polyprenyl-1,4-benzoquinol methylase</fullName>
    </alternativeName>
    <alternativeName>
        <fullName evidence="1">Demethylmenaquinone methyltransferase</fullName>
    </alternativeName>
</protein>
<evidence type="ECO:0000255" key="1">
    <source>
        <dbReference type="HAMAP-Rule" id="MF_01813"/>
    </source>
</evidence>
<name>UBIE_BURM9</name>